<organism>
    <name type="scientific">Burkholderia orbicola (strain MC0-3)</name>
    <dbReference type="NCBI Taxonomy" id="406425"/>
    <lineage>
        <taxon>Bacteria</taxon>
        <taxon>Pseudomonadati</taxon>
        <taxon>Pseudomonadota</taxon>
        <taxon>Betaproteobacteria</taxon>
        <taxon>Burkholderiales</taxon>
        <taxon>Burkholderiaceae</taxon>
        <taxon>Burkholderia</taxon>
        <taxon>Burkholderia cepacia complex</taxon>
        <taxon>Burkholderia orbicola</taxon>
    </lineage>
</organism>
<feature type="chain" id="PRO_1000119841" description="Homogentisate 1,2-dioxygenase">
    <location>
        <begin position="1"/>
        <end position="444"/>
    </location>
</feature>
<feature type="active site" description="Proton acceptor" evidence="1">
    <location>
        <position position="298"/>
    </location>
</feature>
<feature type="binding site" evidence="1">
    <location>
        <position position="341"/>
    </location>
    <ligand>
        <name>Fe cation</name>
        <dbReference type="ChEBI" id="CHEBI:24875"/>
    </ligand>
</feature>
<feature type="binding site" evidence="1">
    <location>
        <position position="347"/>
    </location>
    <ligand>
        <name>Fe cation</name>
        <dbReference type="ChEBI" id="CHEBI:24875"/>
    </ligand>
</feature>
<feature type="binding site" evidence="1">
    <location>
        <position position="356"/>
    </location>
    <ligand>
        <name>homogentisate</name>
        <dbReference type="ChEBI" id="CHEBI:16169"/>
    </ligand>
</feature>
<feature type="binding site" evidence="1">
    <location>
        <position position="377"/>
    </location>
    <ligand>
        <name>Fe cation</name>
        <dbReference type="ChEBI" id="CHEBI:24875"/>
    </ligand>
</feature>
<feature type="binding site" evidence="1">
    <location>
        <position position="377"/>
    </location>
    <ligand>
        <name>homogentisate</name>
        <dbReference type="ChEBI" id="CHEBI:16169"/>
    </ligand>
</feature>
<proteinExistence type="inferred from homology"/>
<comment type="function">
    <text evidence="1">Involved in the catabolism of homogentisate (2,5-dihydroxyphenylacetate or 2,5-OH-PhAc), a central intermediate in the degradation of phenylalanine and tyrosine. Catalyzes the oxidative ring cleavage of the aromatic ring of homogentisate to yield maleylacetoacetate.</text>
</comment>
<comment type="catalytic activity">
    <reaction evidence="1">
        <text>homogentisate + O2 = 4-maleylacetoacetate + H(+)</text>
        <dbReference type="Rhea" id="RHEA:15449"/>
        <dbReference type="ChEBI" id="CHEBI:15378"/>
        <dbReference type="ChEBI" id="CHEBI:15379"/>
        <dbReference type="ChEBI" id="CHEBI:16169"/>
        <dbReference type="ChEBI" id="CHEBI:17105"/>
        <dbReference type="EC" id="1.13.11.5"/>
    </reaction>
</comment>
<comment type="cofactor">
    <cofactor evidence="1">
        <name>Fe cation</name>
        <dbReference type="ChEBI" id="CHEBI:24875"/>
    </cofactor>
</comment>
<comment type="pathway">
    <text evidence="1">Amino-acid degradation; L-phenylalanine degradation; acetoacetate and fumarate from L-phenylalanine: step 4/6.</text>
</comment>
<comment type="subunit">
    <text evidence="1">Hexamer; dimer of trimers.</text>
</comment>
<comment type="similarity">
    <text evidence="1">Belongs to the homogentisate dioxygenase family.</text>
</comment>
<accession>B1JWJ3</accession>
<sequence>MTLDLSKPATAGYLSGFANEFATEALPGALPHGRNSPQRAPYGLYAEQLSGTAFTAPRGHNRRSWLYRIRPAAVHRPFEPYAGAQRLVSEFGDSADVPPTPPNQLRWDPLPMLVEPTDFVDGLVTMAGNGSAAAMNGCAIHLYAANRSMQDRFFYSADGELLIVPQQGRLFIATEFGRLDVEPFEIAVIPRGVRFAVALPDGDARGYICENFGALLRLPDLGPIGSNGLANPRDFLTPQAAYEDREGAFELIAKLNGRLWRADIGHSPLDVVAWHGNYAPYKYDLRLFNTIGSISFDHPDPSIFLVLQAQSDTPGVDTIDFVIFPPRWLAAEDTFRPPWFHRNVASEFMGLVHGAYDAKAEGFVPGGASLHNCMSGHGPDADTFEKASASDTTKPHKVDATMAFMFETRTLIRPTCYALDTAQLQADYFECWQGIKKHFNPEQK</sequence>
<keyword id="KW-0223">Dioxygenase</keyword>
<keyword id="KW-0408">Iron</keyword>
<keyword id="KW-0479">Metal-binding</keyword>
<keyword id="KW-0560">Oxidoreductase</keyword>
<keyword id="KW-0585">Phenylalanine catabolism</keyword>
<keyword id="KW-0828">Tyrosine catabolism</keyword>
<protein>
    <recommendedName>
        <fullName evidence="1">Homogentisate 1,2-dioxygenase</fullName>
        <shortName evidence="1">HGDO</shortName>
        <ecNumber evidence="1">1.13.11.5</ecNumber>
    </recommendedName>
    <alternativeName>
        <fullName evidence="1">Homogentisate oxygenase</fullName>
    </alternativeName>
    <alternativeName>
        <fullName evidence="1">Homogentisic acid oxidase</fullName>
    </alternativeName>
    <alternativeName>
        <fullName evidence="1">Homogentisicase</fullName>
    </alternativeName>
</protein>
<evidence type="ECO:0000255" key="1">
    <source>
        <dbReference type="HAMAP-Rule" id="MF_00334"/>
    </source>
</evidence>
<name>HGD_BURO0</name>
<gene>
    <name evidence="1" type="primary">hmgA</name>
    <name type="ordered locus">Bcenmc03_0789</name>
</gene>
<reference key="1">
    <citation type="submission" date="2008-02" db="EMBL/GenBank/DDBJ databases">
        <title>Complete sequence of chromosome 1 of Burkholderia cenocepacia MC0-3.</title>
        <authorList>
            <person name="Copeland A."/>
            <person name="Lucas S."/>
            <person name="Lapidus A."/>
            <person name="Barry K."/>
            <person name="Bruce D."/>
            <person name="Goodwin L."/>
            <person name="Glavina del Rio T."/>
            <person name="Dalin E."/>
            <person name="Tice H."/>
            <person name="Pitluck S."/>
            <person name="Chain P."/>
            <person name="Malfatti S."/>
            <person name="Shin M."/>
            <person name="Vergez L."/>
            <person name="Schmutz J."/>
            <person name="Larimer F."/>
            <person name="Land M."/>
            <person name="Hauser L."/>
            <person name="Kyrpides N."/>
            <person name="Mikhailova N."/>
            <person name="Tiedje J."/>
            <person name="Richardson P."/>
        </authorList>
    </citation>
    <scope>NUCLEOTIDE SEQUENCE [LARGE SCALE GENOMIC DNA]</scope>
    <source>
        <strain>MC0-3</strain>
    </source>
</reference>
<dbReference type="EC" id="1.13.11.5" evidence="1"/>
<dbReference type="EMBL" id="CP000958">
    <property type="protein sequence ID" value="ACA89967.1"/>
    <property type="molecule type" value="Genomic_DNA"/>
</dbReference>
<dbReference type="RefSeq" id="WP_012327989.1">
    <property type="nucleotide sequence ID" value="NC_010508.1"/>
</dbReference>
<dbReference type="SMR" id="B1JWJ3"/>
<dbReference type="GeneID" id="83047582"/>
<dbReference type="KEGG" id="bcm:Bcenmc03_0789"/>
<dbReference type="HOGENOM" id="CLU_027174_0_0_4"/>
<dbReference type="UniPathway" id="UPA00139">
    <property type="reaction ID" value="UER00339"/>
</dbReference>
<dbReference type="Proteomes" id="UP000002169">
    <property type="component" value="Chromosome 1"/>
</dbReference>
<dbReference type="GO" id="GO:0005737">
    <property type="term" value="C:cytoplasm"/>
    <property type="evidence" value="ECO:0007669"/>
    <property type="project" value="TreeGrafter"/>
</dbReference>
<dbReference type="GO" id="GO:0004411">
    <property type="term" value="F:homogentisate 1,2-dioxygenase activity"/>
    <property type="evidence" value="ECO:0007669"/>
    <property type="project" value="UniProtKB-UniRule"/>
</dbReference>
<dbReference type="GO" id="GO:0005506">
    <property type="term" value="F:iron ion binding"/>
    <property type="evidence" value="ECO:0007669"/>
    <property type="project" value="UniProtKB-UniRule"/>
</dbReference>
<dbReference type="GO" id="GO:0006559">
    <property type="term" value="P:L-phenylalanine catabolic process"/>
    <property type="evidence" value="ECO:0007669"/>
    <property type="project" value="UniProtKB-UniRule"/>
</dbReference>
<dbReference type="GO" id="GO:0006572">
    <property type="term" value="P:tyrosine catabolic process"/>
    <property type="evidence" value="ECO:0007669"/>
    <property type="project" value="UniProtKB-UniRule"/>
</dbReference>
<dbReference type="CDD" id="cd07000">
    <property type="entry name" value="cupin_HGO_N"/>
    <property type="match status" value="1"/>
</dbReference>
<dbReference type="FunFam" id="2.60.120.10:FF:000034">
    <property type="entry name" value="Homogentisate 1,2-dioxygenase"/>
    <property type="match status" value="1"/>
</dbReference>
<dbReference type="Gene3D" id="2.60.120.10">
    <property type="entry name" value="Jelly Rolls"/>
    <property type="match status" value="1"/>
</dbReference>
<dbReference type="HAMAP" id="MF_00334">
    <property type="entry name" value="Homogentis_dioxygen"/>
    <property type="match status" value="1"/>
</dbReference>
<dbReference type="InterPro" id="IPR046451">
    <property type="entry name" value="HgmA_C"/>
</dbReference>
<dbReference type="InterPro" id="IPR046452">
    <property type="entry name" value="HgmA_N"/>
</dbReference>
<dbReference type="InterPro" id="IPR005708">
    <property type="entry name" value="Homogentis_dOase"/>
</dbReference>
<dbReference type="InterPro" id="IPR022950">
    <property type="entry name" value="Homogentis_dOase_bac"/>
</dbReference>
<dbReference type="InterPro" id="IPR014710">
    <property type="entry name" value="RmlC-like_jellyroll"/>
</dbReference>
<dbReference type="InterPro" id="IPR011051">
    <property type="entry name" value="RmlC_Cupin_sf"/>
</dbReference>
<dbReference type="NCBIfam" id="TIGR01015">
    <property type="entry name" value="hmgA"/>
    <property type="match status" value="1"/>
</dbReference>
<dbReference type="PANTHER" id="PTHR11056">
    <property type="entry name" value="HOMOGENTISATE 1,2-DIOXYGENASE"/>
    <property type="match status" value="1"/>
</dbReference>
<dbReference type="PANTHER" id="PTHR11056:SF0">
    <property type="entry name" value="HOMOGENTISATE 1,2-DIOXYGENASE"/>
    <property type="match status" value="1"/>
</dbReference>
<dbReference type="Pfam" id="PF04209">
    <property type="entry name" value="HgmA_C"/>
    <property type="match status" value="1"/>
</dbReference>
<dbReference type="Pfam" id="PF20510">
    <property type="entry name" value="HgmA_N"/>
    <property type="match status" value="1"/>
</dbReference>
<dbReference type="SUPFAM" id="SSF51182">
    <property type="entry name" value="RmlC-like cupins"/>
    <property type="match status" value="1"/>
</dbReference>